<reference key="1">
    <citation type="journal article" date="2007" name="Proc. Natl. Acad. Sci. U.S.A.">
        <title>Deep-sea vent epsilon-proteobacterial genomes provide insights into emergence of pathogens.</title>
        <authorList>
            <person name="Nakagawa S."/>
            <person name="Takaki Y."/>
            <person name="Shimamura S."/>
            <person name="Reysenbach A.-L."/>
            <person name="Takai K."/>
            <person name="Horikoshi K."/>
        </authorList>
    </citation>
    <scope>NUCLEOTIDE SEQUENCE [LARGE SCALE GENOMIC DNA]</scope>
    <source>
        <strain>SB155-2</strain>
    </source>
</reference>
<organism>
    <name type="scientific">Nitratiruptor sp. (strain SB155-2)</name>
    <dbReference type="NCBI Taxonomy" id="387092"/>
    <lineage>
        <taxon>Bacteria</taxon>
        <taxon>Pseudomonadati</taxon>
        <taxon>Campylobacterota</taxon>
        <taxon>Epsilonproteobacteria</taxon>
        <taxon>Nautiliales</taxon>
        <taxon>Nitratiruptoraceae</taxon>
        <taxon>Nitratiruptor</taxon>
    </lineage>
</organism>
<protein>
    <recommendedName>
        <fullName evidence="1">Small ribosomal subunit protein uS5</fullName>
    </recommendedName>
    <alternativeName>
        <fullName evidence="2">30S ribosomal protein S5</fullName>
    </alternativeName>
</protein>
<sequence length="147" mass="15830">MEKWNREEFEEVVVNISRVTKVVKGGRRFRFSALVVVGDKKGHVGYGIGKAKEVPDAIKKAIDNAFKNITTVNIKGTTIAHDIEHKYNASKILLKPASQGTGVIAGGAARPVLELAGIQDILTKSLGSNNPATLVRATIEALERIKG</sequence>
<accession>A6Q1J5</accession>
<keyword id="KW-1185">Reference proteome</keyword>
<keyword id="KW-0687">Ribonucleoprotein</keyword>
<keyword id="KW-0689">Ribosomal protein</keyword>
<keyword id="KW-0694">RNA-binding</keyword>
<keyword id="KW-0699">rRNA-binding</keyword>
<evidence type="ECO:0000255" key="1">
    <source>
        <dbReference type="HAMAP-Rule" id="MF_01307"/>
    </source>
</evidence>
<evidence type="ECO:0000305" key="2"/>
<proteinExistence type="inferred from homology"/>
<name>RS5_NITSB</name>
<dbReference type="EMBL" id="AP009178">
    <property type="protein sequence ID" value="BAF69354.1"/>
    <property type="molecule type" value="Genomic_DNA"/>
</dbReference>
<dbReference type="RefSeq" id="WP_012081617.1">
    <property type="nucleotide sequence ID" value="NC_009662.1"/>
</dbReference>
<dbReference type="SMR" id="A6Q1J5"/>
<dbReference type="FunCoup" id="A6Q1J5">
    <property type="interactions" value="539"/>
</dbReference>
<dbReference type="STRING" id="387092.NIS_0240"/>
<dbReference type="KEGG" id="nis:NIS_0240"/>
<dbReference type="eggNOG" id="COG0098">
    <property type="taxonomic scope" value="Bacteria"/>
</dbReference>
<dbReference type="HOGENOM" id="CLU_065898_2_2_7"/>
<dbReference type="InParanoid" id="A6Q1J5"/>
<dbReference type="OrthoDB" id="9809045at2"/>
<dbReference type="Proteomes" id="UP000001118">
    <property type="component" value="Chromosome"/>
</dbReference>
<dbReference type="GO" id="GO:0015935">
    <property type="term" value="C:small ribosomal subunit"/>
    <property type="evidence" value="ECO:0007669"/>
    <property type="project" value="InterPro"/>
</dbReference>
<dbReference type="GO" id="GO:0019843">
    <property type="term" value="F:rRNA binding"/>
    <property type="evidence" value="ECO:0007669"/>
    <property type="project" value="UniProtKB-UniRule"/>
</dbReference>
<dbReference type="GO" id="GO:0003735">
    <property type="term" value="F:structural constituent of ribosome"/>
    <property type="evidence" value="ECO:0007669"/>
    <property type="project" value="InterPro"/>
</dbReference>
<dbReference type="GO" id="GO:0006412">
    <property type="term" value="P:translation"/>
    <property type="evidence" value="ECO:0007669"/>
    <property type="project" value="UniProtKB-UniRule"/>
</dbReference>
<dbReference type="FunFam" id="3.30.160.20:FF:000001">
    <property type="entry name" value="30S ribosomal protein S5"/>
    <property type="match status" value="1"/>
</dbReference>
<dbReference type="FunFam" id="3.30.230.10:FF:000024">
    <property type="entry name" value="30S ribosomal protein S5"/>
    <property type="match status" value="1"/>
</dbReference>
<dbReference type="Gene3D" id="3.30.160.20">
    <property type="match status" value="1"/>
</dbReference>
<dbReference type="Gene3D" id="3.30.230.10">
    <property type="match status" value="1"/>
</dbReference>
<dbReference type="HAMAP" id="MF_01307_B">
    <property type="entry name" value="Ribosomal_uS5_B"/>
    <property type="match status" value="1"/>
</dbReference>
<dbReference type="InterPro" id="IPR020568">
    <property type="entry name" value="Ribosomal_Su5_D2-typ_SF"/>
</dbReference>
<dbReference type="InterPro" id="IPR000851">
    <property type="entry name" value="Ribosomal_uS5"/>
</dbReference>
<dbReference type="InterPro" id="IPR005712">
    <property type="entry name" value="Ribosomal_uS5_bac-type"/>
</dbReference>
<dbReference type="InterPro" id="IPR005324">
    <property type="entry name" value="Ribosomal_uS5_C"/>
</dbReference>
<dbReference type="InterPro" id="IPR013810">
    <property type="entry name" value="Ribosomal_uS5_N"/>
</dbReference>
<dbReference type="InterPro" id="IPR018192">
    <property type="entry name" value="Ribosomal_uS5_N_CS"/>
</dbReference>
<dbReference type="InterPro" id="IPR014721">
    <property type="entry name" value="Ribsml_uS5_D2-typ_fold_subgr"/>
</dbReference>
<dbReference type="NCBIfam" id="TIGR01021">
    <property type="entry name" value="rpsE_bact"/>
    <property type="match status" value="1"/>
</dbReference>
<dbReference type="PANTHER" id="PTHR48277">
    <property type="entry name" value="MITOCHONDRIAL RIBOSOMAL PROTEIN S5"/>
    <property type="match status" value="1"/>
</dbReference>
<dbReference type="PANTHER" id="PTHR48277:SF1">
    <property type="entry name" value="MITOCHONDRIAL RIBOSOMAL PROTEIN S5"/>
    <property type="match status" value="1"/>
</dbReference>
<dbReference type="Pfam" id="PF00333">
    <property type="entry name" value="Ribosomal_S5"/>
    <property type="match status" value="1"/>
</dbReference>
<dbReference type="Pfam" id="PF03719">
    <property type="entry name" value="Ribosomal_S5_C"/>
    <property type="match status" value="1"/>
</dbReference>
<dbReference type="SUPFAM" id="SSF54768">
    <property type="entry name" value="dsRNA-binding domain-like"/>
    <property type="match status" value="1"/>
</dbReference>
<dbReference type="SUPFAM" id="SSF54211">
    <property type="entry name" value="Ribosomal protein S5 domain 2-like"/>
    <property type="match status" value="1"/>
</dbReference>
<dbReference type="PROSITE" id="PS00585">
    <property type="entry name" value="RIBOSOMAL_S5"/>
    <property type="match status" value="1"/>
</dbReference>
<dbReference type="PROSITE" id="PS50881">
    <property type="entry name" value="S5_DSRBD"/>
    <property type="match status" value="1"/>
</dbReference>
<gene>
    <name evidence="1" type="primary">rpsE</name>
    <name type="ordered locus">NIS_0240</name>
</gene>
<feature type="chain" id="PRO_0000323159" description="Small ribosomal subunit protein uS5">
    <location>
        <begin position="1"/>
        <end position="147"/>
    </location>
</feature>
<feature type="domain" description="S5 DRBM" evidence="1">
    <location>
        <begin position="9"/>
        <end position="72"/>
    </location>
</feature>
<comment type="function">
    <text evidence="1">With S4 and S12 plays an important role in translational accuracy.</text>
</comment>
<comment type="function">
    <text evidence="1">Located at the back of the 30S subunit body where it stabilizes the conformation of the head with respect to the body.</text>
</comment>
<comment type="subunit">
    <text evidence="1">Part of the 30S ribosomal subunit. Contacts proteins S4 and S8.</text>
</comment>
<comment type="domain">
    <text>The N-terminal domain interacts with the head of the 30S subunit; the C-terminal domain interacts with the body and contacts protein S4. The interaction surface between S4 and S5 is involved in control of translational fidelity.</text>
</comment>
<comment type="similarity">
    <text evidence="1">Belongs to the universal ribosomal protein uS5 family.</text>
</comment>